<protein>
    <recommendedName>
        <fullName evidence="1">Dihydroorotase</fullName>
        <shortName evidence="1">DHOase</shortName>
        <ecNumber evidence="1">3.5.2.3</ecNumber>
    </recommendedName>
</protein>
<accession>B1J4I2</accession>
<gene>
    <name evidence="1" type="primary">pyrC</name>
    <name type="ordered locus">PputW619_1115</name>
</gene>
<comment type="function">
    <text evidence="1">Catalyzes the reversible cyclization of carbamoyl aspartate to dihydroorotate.</text>
</comment>
<comment type="catalytic activity">
    <reaction evidence="1">
        <text>(S)-dihydroorotate + H2O = N-carbamoyl-L-aspartate + H(+)</text>
        <dbReference type="Rhea" id="RHEA:24296"/>
        <dbReference type="ChEBI" id="CHEBI:15377"/>
        <dbReference type="ChEBI" id="CHEBI:15378"/>
        <dbReference type="ChEBI" id="CHEBI:30864"/>
        <dbReference type="ChEBI" id="CHEBI:32814"/>
        <dbReference type="EC" id="3.5.2.3"/>
    </reaction>
</comment>
<comment type="cofactor">
    <cofactor evidence="1">
        <name>Zn(2+)</name>
        <dbReference type="ChEBI" id="CHEBI:29105"/>
    </cofactor>
    <text evidence="1">Binds 2 Zn(2+) ions per subunit.</text>
</comment>
<comment type="pathway">
    <text evidence="1">Pyrimidine metabolism; UMP biosynthesis via de novo pathway; (S)-dihydroorotate from bicarbonate: step 3/3.</text>
</comment>
<comment type="subunit">
    <text evidence="1">Homodimer.</text>
</comment>
<comment type="similarity">
    <text evidence="1">Belongs to the metallo-dependent hydrolases superfamily. DHOase family. Class II DHOase subfamily.</text>
</comment>
<dbReference type="EC" id="3.5.2.3" evidence="1"/>
<dbReference type="EMBL" id="CP000949">
    <property type="protein sequence ID" value="ACA71620.1"/>
    <property type="molecule type" value="Genomic_DNA"/>
</dbReference>
<dbReference type="SMR" id="B1J4I2"/>
<dbReference type="STRING" id="390235.PputW619_1115"/>
<dbReference type="KEGG" id="ppw:PputW619_1115"/>
<dbReference type="eggNOG" id="COG0418">
    <property type="taxonomic scope" value="Bacteria"/>
</dbReference>
<dbReference type="HOGENOM" id="CLU_041558_1_0_6"/>
<dbReference type="OrthoDB" id="9808095at2"/>
<dbReference type="UniPathway" id="UPA00070">
    <property type="reaction ID" value="UER00117"/>
</dbReference>
<dbReference type="GO" id="GO:0005829">
    <property type="term" value="C:cytosol"/>
    <property type="evidence" value="ECO:0007669"/>
    <property type="project" value="TreeGrafter"/>
</dbReference>
<dbReference type="GO" id="GO:0004151">
    <property type="term" value="F:dihydroorotase activity"/>
    <property type="evidence" value="ECO:0007669"/>
    <property type="project" value="UniProtKB-UniRule"/>
</dbReference>
<dbReference type="GO" id="GO:0008270">
    <property type="term" value="F:zinc ion binding"/>
    <property type="evidence" value="ECO:0007669"/>
    <property type="project" value="UniProtKB-UniRule"/>
</dbReference>
<dbReference type="GO" id="GO:0006207">
    <property type="term" value="P:'de novo' pyrimidine nucleobase biosynthetic process"/>
    <property type="evidence" value="ECO:0007669"/>
    <property type="project" value="TreeGrafter"/>
</dbReference>
<dbReference type="GO" id="GO:0044205">
    <property type="term" value="P:'de novo' UMP biosynthetic process"/>
    <property type="evidence" value="ECO:0007669"/>
    <property type="project" value="UniProtKB-UniRule"/>
</dbReference>
<dbReference type="CDD" id="cd01294">
    <property type="entry name" value="DHOase"/>
    <property type="match status" value="1"/>
</dbReference>
<dbReference type="FunFam" id="3.20.20.140:FF:000006">
    <property type="entry name" value="Dihydroorotase"/>
    <property type="match status" value="1"/>
</dbReference>
<dbReference type="Gene3D" id="3.20.20.140">
    <property type="entry name" value="Metal-dependent hydrolases"/>
    <property type="match status" value="1"/>
</dbReference>
<dbReference type="HAMAP" id="MF_00219">
    <property type="entry name" value="PyrC_classII"/>
    <property type="match status" value="1"/>
</dbReference>
<dbReference type="InterPro" id="IPR006680">
    <property type="entry name" value="Amidohydro-rel"/>
</dbReference>
<dbReference type="InterPro" id="IPR004721">
    <property type="entry name" value="DHOdimr"/>
</dbReference>
<dbReference type="InterPro" id="IPR002195">
    <property type="entry name" value="Dihydroorotase_CS"/>
</dbReference>
<dbReference type="InterPro" id="IPR032466">
    <property type="entry name" value="Metal_Hydrolase"/>
</dbReference>
<dbReference type="NCBIfam" id="TIGR00856">
    <property type="entry name" value="pyrC_dimer"/>
    <property type="match status" value="1"/>
</dbReference>
<dbReference type="PANTHER" id="PTHR43137">
    <property type="entry name" value="DIHYDROOROTASE"/>
    <property type="match status" value="1"/>
</dbReference>
<dbReference type="PANTHER" id="PTHR43137:SF1">
    <property type="entry name" value="DIHYDROOROTASE"/>
    <property type="match status" value="1"/>
</dbReference>
<dbReference type="Pfam" id="PF01979">
    <property type="entry name" value="Amidohydro_1"/>
    <property type="match status" value="1"/>
</dbReference>
<dbReference type="PIRSF" id="PIRSF001237">
    <property type="entry name" value="DHOdimr"/>
    <property type="match status" value="1"/>
</dbReference>
<dbReference type="SUPFAM" id="SSF51556">
    <property type="entry name" value="Metallo-dependent hydrolases"/>
    <property type="match status" value="1"/>
</dbReference>
<dbReference type="PROSITE" id="PS00482">
    <property type="entry name" value="DIHYDROOROTASE_1"/>
    <property type="match status" value="1"/>
</dbReference>
<dbReference type="PROSITE" id="PS00483">
    <property type="entry name" value="DIHYDROOROTASE_2"/>
    <property type="match status" value="1"/>
</dbReference>
<sequence length="348" mass="38409">MSDRLTLLRPDDWHIHLRDGAVLPHTVGDVARTFARAIIMPNLVPPVRNADEAGAYRERILNARPAGSRFEPLMVLYLTDRTSPEDIRAAKASGIVYAAKLYPAGATTNSDSGVTSIDNIFPAIEALAEVGMPLLVHGEVTRSEIDVFDREKRFIDEHMRRLVERFPTLKVVFEHITTADAAQFVTEAPANVGATITAQHLLYNRNHMLVGGIRPHFYCLPILKRNTHQVALLDAATSGNPKFFLGTDSAPHARHAKEAACGCAGCYTAYAAIEMYAEAFEQRNALDKLEGFASLHGPAFYGLPANTDTITLVREEWTAPDSLPFGEQTVIPLRAGEKLRWRLLEDNA</sequence>
<proteinExistence type="inferred from homology"/>
<keyword id="KW-0378">Hydrolase</keyword>
<keyword id="KW-0479">Metal-binding</keyword>
<keyword id="KW-0665">Pyrimidine biosynthesis</keyword>
<keyword id="KW-0862">Zinc</keyword>
<reference key="1">
    <citation type="submission" date="2008-02" db="EMBL/GenBank/DDBJ databases">
        <title>Complete sequence of Pseudomonas putida W619.</title>
        <authorList>
            <person name="Copeland A."/>
            <person name="Lucas S."/>
            <person name="Lapidus A."/>
            <person name="Barry K."/>
            <person name="Detter J.C."/>
            <person name="Glavina del Rio T."/>
            <person name="Dalin E."/>
            <person name="Tice H."/>
            <person name="Pitluck S."/>
            <person name="Chain P."/>
            <person name="Malfatti S."/>
            <person name="Shin M."/>
            <person name="Vergez L."/>
            <person name="Schmutz J."/>
            <person name="Larimer F."/>
            <person name="Land M."/>
            <person name="Hauser L."/>
            <person name="Kyrpides N."/>
            <person name="Kim E."/>
            <person name="Taghavi S."/>
            <person name="Vangronsveld D."/>
            <person name="van der Lelie D."/>
            <person name="Richardson P."/>
        </authorList>
    </citation>
    <scope>NUCLEOTIDE SEQUENCE [LARGE SCALE GENOMIC DNA]</scope>
    <source>
        <strain>W619</strain>
    </source>
</reference>
<evidence type="ECO:0000255" key="1">
    <source>
        <dbReference type="HAMAP-Rule" id="MF_00219"/>
    </source>
</evidence>
<name>PYRC_PSEPW</name>
<feature type="chain" id="PRO_1000100051" description="Dihydroorotase">
    <location>
        <begin position="1"/>
        <end position="348"/>
    </location>
</feature>
<feature type="active site" evidence="1">
    <location>
        <position position="248"/>
    </location>
</feature>
<feature type="binding site" evidence="1">
    <location>
        <position position="14"/>
    </location>
    <ligand>
        <name>Zn(2+)</name>
        <dbReference type="ChEBI" id="CHEBI:29105"/>
        <label>1</label>
    </ligand>
</feature>
<feature type="binding site" evidence="1">
    <location>
        <begin position="16"/>
        <end position="18"/>
    </location>
    <ligand>
        <name>substrate</name>
    </ligand>
</feature>
<feature type="binding site" evidence="1">
    <location>
        <position position="16"/>
    </location>
    <ligand>
        <name>Zn(2+)</name>
        <dbReference type="ChEBI" id="CHEBI:29105"/>
        <label>1</label>
    </ligand>
</feature>
<feature type="binding site" evidence="1">
    <location>
        <position position="42"/>
    </location>
    <ligand>
        <name>substrate</name>
    </ligand>
</feature>
<feature type="binding site" description="via carbamate group" evidence="1">
    <location>
        <position position="100"/>
    </location>
    <ligand>
        <name>Zn(2+)</name>
        <dbReference type="ChEBI" id="CHEBI:29105"/>
        <label>1</label>
    </ligand>
</feature>
<feature type="binding site" description="via carbamate group" evidence="1">
    <location>
        <position position="100"/>
    </location>
    <ligand>
        <name>Zn(2+)</name>
        <dbReference type="ChEBI" id="CHEBI:29105"/>
        <label>2</label>
    </ligand>
</feature>
<feature type="binding site" evidence="1">
    <location>
        <position position="137"/>
    </location>
    <ligand>
        <name>substrate</name>
    </ligand>
</feature>
<feature type="binding site" evidence="1">
    <location>
        <position position="137"/>
    </location>
    <ligand>
        <name>Zn(2+)</name>
        <dbReference type="ChEBI" id="CHEBI:29105"/>
        <label>2</label>
    </ligand>
</feature>
<feature type="binding site" evidence="1">
    <location>
        <position position="175"/>
    </location>
    <ligand>
        <name>Zn(2+)</name>
        <dbReference type="ChEBI" id="CHEBI:29105"/>
        <label>2</label>
    </ligand>
</feature>
<feature type="binding site" evidence="1">
    <location>
        <position position="220"/>
    </location>
    <ligand>
        <name>substrate</name>
    </ligand>
</feature>
<feature type="binding site" evidence="1">
    <location>
        <position position="248"/>
    </location>
    <ligand>
        <name>Zn(2+)</name>
        <dbReference type="ChEBI" id="CHEBI:29105"/>
        <label>1</label>
    </ligand>
</feature>
<feature type="binding site" evidence="1">
    <location>
        <position position="252"/>
    </location>
    <ligand>
        <name>substrate</name>
    </ligand>
</feature>
<feature type="binding site" evidence="1">
    <location>
        <position position="264"/>
    </location>
    <ligand>
        <name>substrate</name>
    </ligand>
</feature>
<feature type="modified residue" description="N6-carboxylysine" evidence="1">
    <location>
        <position position="100"/>
    </location>
</feature>
<organism>
    <name type="scientific">Pseudomonas putida (strain W619)</name>
    <dbReference type="NCBI Taxonomy" id="390235"/>
    <lineage>
        <taxon>Bacteria</taxon>
        <taxon>Pseudomonadati</taxon>
        <taxon>Pseudomonadota</taxon>
        <taxon>Gammaproteobacteria</taxon>
        <taxon>Pseudomonadales</taxon>
        <taxon>Pseudomonadaceae</taxon>
        <taxon>Pseudomonas</taxon>
    </lineage>
</organism>